<gene>
    <name type="primary">abrB</name>
    <name type="synonym">ybgN</name>
    <name type="ordered locus">b0715</name>
    <name type="ordered locus">JW5097</name>
    <name type="ORF">ECK0704</name>
</gene>
<sequence>MPVLQWGMLCVLSLLLSIGFLAVHLPAALLLGPMIAGIIFSMRGITLQLPRSAFLAAQAILGCMIAQNLTGSILTTLAVNWPIVLAILLVTLLSSAIVGWLLVRYSSLPGNTGAWGSSPGGAAAMVAMAQDYGADIRLVAFMQYLRVLFVAGAAVLVTRMMLGDNAEAVNQHIVWFPPVSINLLLTILLAVVAGTVGCLLRLPSGTMLIPMLAGAVLQSGQLITIELPEWLLAMAYMAIGWRIGLGFDKQILLRALRPLPQILLSIFALLAICAGMAWGLTRFMHIDFMTAYLATSPGGLDTVAVIAAGSNADMALIMAMQTLRLFSILLTGPAIARFISTYAPKRSA</sequence>
<organism>
    <name type="scientific">Escherichia coli (strain K12)</name>
    <dbReference type="NCBI Taxonomy" id="83333"/>
    <lineage>
        <taxon>Bacteria</taxon>
        <taxon>Pseudomonadati</taxon>
        <taxon>Pseudomonadota</taxon>
        <taxon>Gammaproteobacteria</taxon>
        <taxon>Enterobacterales</taxon>
        <taxon>Enterobacteriaceae</taxon>
        <taxon>Escherichia</taxon>
    </lineage>
</organism>
<keyword id="KW-0997">Cell inner membrane</keyword>
<keyword id="KW-1003">Cell membrane</keyword>
<keyword id="KW-0472">Membrane</keyword>
<keyword id="KW-1185">Reference proteome</keyword>
<keyword id="KW-0812">Transmembrane</keyword>
<keyword id="KW-1133">Transmembrane helix</keyword>
<feature type="chain" id="PRO_0000064432" description="Putative regulator AbrB">
    <location>
        <begin position="1"/>
        <end position="348"/>
    </location>
</feature>
<feature type="transmembrane region" description="Helical" evidence="1">
    <location>
        <begin position="20"/>
        <end position="40"/>
    </location>
</feature>
<feature type="transmembrane region" description="Helical" evidence="1">
    <location>
        <begin position="59"/>
        <end position="79"/>
    </location>
</feature>
<feature type="transmembrane region" description="Helical" evidence="1">
    <location>
        <begin position="83"/>
        <end position="103"/>
    </location>
</feature>
<feature type="transmembrane region" description="Helical" evidence="1">
    <location>
        <begin position="138"/>
        <end position="158"/>
    </location>
</feature>
<feature type="transmembrane region" description="Helical" evidence="1">
    <location>
        <begin position="173"/>
        <end position="193"/>
    </location>
</feature>
<feature type="transmembrane region" description="Helical" evidence="1">
    <location>
        <begin position="196"/>
        <end position="216"/>
    </location>
</feature>
<feature type="transmembrane region" description="Helical" evidence="1">
    <location>
        <begin position="221"/>
        <end position="241"/>
    </location>
</feature>
<feature type="transmembrane region" description="Helical" evidence="1">
    <location>
        <begin position="259"/>
        <end position="279"/>
    </location>
</feature>
<feature type="transmembrane region" description="Helical" evidence="1">
    <location>
        <begin position="288"/>
        <end position="308"/>
    </location>
</feature>
<feature type="transmembrane region" description="Helical" evidence="1">
    <location>
        <begin position="315"/>
        <end position="335"/>
    </location>
</feature>
<proteinExistence type="inferred from homology"/>
<accession>P75747</accession>
<evidence type="ECO:0000255" key="1"/>
<evidence type="ECO:0000269" key="2">
    <source>
    </source>
</evidence>
<evidence type="ECO:0000305" key="3"/>
<dbReference type="EMBL" id="U00096">
    <property type="protein sequence ID" value="AAC73809.2"/>
    <property type="molecule type" value="Genomic_DNA"/>
</dbReference>
<dbReference type="EMBL" id="AP009048">
    <property type="protein sequence ID" value="BAA35379.2"/>
    <property type="molecule type" value="Genomic_DNA"/>
</dbReference>
<dbReference type="PIR" id="B64807">
    <property type="entry name" value="B64807"/>
</dbReference>
<dbReference type="RefSeq" id="NP_415243.4">
    <property type="nucleotide sequence ID" value="NC_000913.3"/>
</dbReference>
<dbReference type="RefSeq" id="WP_001336221.1">
    <property type="nucleotide sequence ID" value="NZ_SSZK01000033.1"/>
</dbReference>
<dbReference type="SMR" id="P75747"/>
<dbReference type="BioGRID" id="4259923">
    <property type="interactions" value="2"/>
</dbReference>
<dbReference type="FunCoup" id="P75747">
    <property type="interactions" value="29"/>
</dbReference>
<dbReference type="STRING" id="511145.b0715"/>
<dbReference type="PaxDb" id="511145-b0715"/>
<dbReference type="EnsemblBacteria" id="AAC73809">
    <property type="protein sequence ID" value="AAC73809"/>
    <property type="gene ID" value="b0715"/>
</dbReference>
<dbReference type="GeneID" id="945321"/>
<dbReference type="KEGG" id="ecj:JW5097"/>
<dbReference type="KEGG" id="eco:b0715"/>
<dbReference type="KEGG" id="ecoc:C3026_03575"/>
<dbReference type="PATRIC" id="fig|1411691.4.peg.1558"/>
<dbReference type="EchoBASE" id="EB3094"/>
<dbReference type="eggNOG" id="COG3180">
    <property type="taxonomic scope" value="Bacteria"/>
</dbReference>
<dbReference type="HOGENOM" id="CLU_050210_0_1_6"/>
<dbReference type="InParanoid" id="P75747"/>
<dbReference type="OMA" id="MQYVRVV"/>
<dbReference type="OrthoDB" id="9809910at2"/>
<dbReference type="PhylomeDB" id="P75747"/>
<dbReference type="BioCyc" id="EcoCyc:G6384-MONOMER"/>
<dbReference type="PRO" id="PR:P75747"/>
<dbReference type="Proteomes" id="UP000000625">
    <property type="component" value="Chromosome"/>
</dbReference>
<dbReference type="GO" id="GO:0005886">
    <property type="term" value="C:plasma membrane"/>
    <property type="evidence" value="ECO:0000314"/>
    <property type="project" value="EcoCyc"/>
</dbReference>
<dbReference type="GO" id="GO:0010468">
    <property type="term" value="P:regulation of gene expression"/>
    <property type="evidence" value="ECO:0007669"/>
    <property type="project" value="InterPro"/>
</dbReference>
<dbReference type="InterPro" id="IPR017516">
    <property type="entry name" value="AbrB_dup"/>
</dbReference>
<dbReference type="InterPro" id="IPR007820">
    <property type="entry name" value="AbrB_fam"/>
</dbReference>
<dbReference type="NCBIfam" id="TIGR03082">
    <property type="entry name" value="Gneg_AbrB_dup"/>
    <property type="match status" value="2"/>
</dbReference>
<dbReference type="PANTHER" id="PTHR38457">
    <property type="entry name" value="REGULATOR ABRB-RELATED"/>
    <property type="match status" value="1"/>
</dbReference>
<dbReference type="PANTHER" id="PTHR38457:SF1">
    <property type="entry name" value="REGULATOR ABRB-RELATED"/>
    <property type="match status" value="1"/>
</dbReference>
<dbReference type="Pfam" id="PF05145">
    <property type="entry name" value="AbrB"/>
    <property type="match status" value="1"/>
</dbReference>
<dbReference type="PIRSF" id="PIRSF038991">
    <property type="entry name" value="Protein_AbrB"/>
    <property type="match status" value="1"/>
</dbReference>
<comment type="function">
    <text>Seems to be involved in the regulation of AidB.</text>
</comment>
<comment type="subcellular location">
    <subcellularLocation>
        <location evidence="2">Cell inner membrane</location>
        <topology evidence="2">Multi-pass membrane protein</topology>
    </subcellularLocation>
</comment>
<comment type="similarity">
    <text evidence="3">Belongs to the AbrB family.</text>
</comment>
<name>ABRB_ECOLI</name>
<protein>
    <recommendedName>
        <fullName>Putative regulator AbrB</fullName>
    </recommendedName>
    <alternativeName>
        <fullName>AidB regulator</fullName>
    </alternativeName>
</protein>
<reference key="1">
    <citation type="journal article" date="1996" name="DNA Res.">
        <title>A 718-kb DNA sequence of the Escherichia coli K-12 genome corresponding to the 12.7-28.0 min region on the linkage map.</title>
        <authorList>
            <person name="Oshima T."/>
            <person name="Aiba H."/>
            <person name="Baba T."/>
            <person name="Fujita K."/>
            <person name="Hayashi K."/>
            <person name="Honjo A."/>
            <person name="Ikemoto K."/>
            <person name="Inada T."/>
            <person name="Itoh T."/>
            <person name="Kajihara M."/>
            <person name="Kanai K."/>
            <person name="Kashimoto K."/>
            <person name="Kimura S."/>
            <person name="Kitagawa M."/>
            <person name="Makino K."/>
            <person name="Masuda S."/>
            <person name="Miki T."/>
            <person name="Mizobuchi K."/>
            <person name="Mori H."/>
            <person name="Motomura K."/>
            <person name="Nakamura Y."/>
            <person name="Nashimoto H."/>
            <person name="Nishio Y."/>
            <person name="Saito N."/>
            <person name="Sampei G."/>
            <person name="Seki Y."/>
            <person name="Tagami H."/>
            <person name="Takemoto K."/>
            <person name="Wada C."/>
            <person name="Yamamoto Y."/>
            <person name="Yano M."/>
            <person name="Horiuchi T."/>
        </authorList>
    </citation>
    <scope>NUCLEOTIDE SEQUENCE [LARGE SCALE GENOMIC DNA]</scope>
    <source>
        <strain>K12 / W3110 / ATCC 27325 / DSM 5911</strain>
    </source>
</reference>
<reference key="2">
    <citation type="journal article" date="1997" name="Science">
        <title>The complete genome sequence of Escherichia coli K-12.</title>
        <authorList>
            <person name="Blattner F.R."/>
            <person name="Plunkett G. III"/>
            <person name="Bloch C.A."/>
            <person name="Perna N.T."/>
            <person name="Burland V."/>
            <person name="Riley M."/>
            <person name="Collado-Vides J."/>
            <person name="Glasner J.D."/>
            <person name="Rode C.K."/>
            <person name="Mayhew G.F."/>
            <person name="Gregor J."/>
            <person name="Davis N.W."/>
            <person name="Kirkpatrick H.A."/>
            <person name="Goeden M.A."/>
            <person name="Rose D.J."/>
            <person name="Mau B."/>
            <person name="Shao Y."/>
        </authorList>
    </citation>
    <scope>NUCLEOTIDE SEQUENCE [LARGE SCALE GENOMIC DNA]</scope>
    <source>
        <strain>K12 / MG1655 / ATCC 47076</strain>
    </source>
</reference>
<reference key="3">
    <citation type="journal article" date="2006" name="Mol. Syst. Biol.">
        <title>Highly accurate genome sequences of Escherichia coli K-12 strains MG1655 and W3110.</title>
        <authorList>
            <person name="Hayashi K."/>
            <person name="Morooka N."/>
            <person name="Yamamoto Y."/>
            <person name="Fujita K."/>
            <person name="Isono K."/>
            <person name="Choi S."/>
            <person name="Ohtsubo E."/>
            <person name="Baba T."/>
            <person name="Wanner B.L."/>
            <person name="Mori H."/>
            <person name="Horiuchi T."/>
        </authorList>
    </citation>
    <scope>NUCLEOTIDE SEQUENCE [LARGE SCALE GENOMIC DNA]</scope>
    <source>
        <strain>K12 / W3110 / ATCC 27325 / DSM 5911</strain>
    </source>
</reference>
<reference key="4">
    <citation type="journal article" date="1994" name="J. Bacteriol.">
        <title>Induction of the Escherichia coli aidB gene under oxygen-limiting conditions requires a functional rpoS (katF) gene.</title>
        <authorList>
            <person name="Volkert M.R."/>
            <person name="Hajec L.I."/>
            <person name="Matijasevic Z."/>
            <person name="Fang F.C."/>
            <person name="Prince R."/>
        </authorList>
    </citation>
    <scope>POSSIBLE FUNCTION</scope>
</reference>
<reference key="5">
    <citation type="journal article" date="2005" name="Science">
        <title>Global topology analysis of the Escherichia coli inner membrane proteome.</title>
        <authorList>
            <person name="Daley D.O."/>
            <person name="Rapp M."/>
            <person name="Granseth E."/>
            <person name="Melen K."/>
            <person name="Drew D."/>
            <person name="von Heijne G."/>
        </authorList>
    </citation>
    <scope>SUBCELLULAR LOCATION</scope>
    <source>
        <strain>K12 / MG1655 / ATCC 47076</strain>
    </source>
</reference>